<gene>
    <name type="primary">MT-CYB</name>
    <name type="synonym">COB</name>
    <name type="synonym">CYTB</name>
    <name type="synonym">MTCYB</name>
</gene>
<keyword id="KW-0249">Electron transport</keyword>
<keyword id="KW-0349">Heme</keyword>
<keyword id="KW-0408">Iron</keyword>
<keyword id="KW-0472">Membrane</keyword>
<keyword id="KW-0479">Metal-binding</keyword>
<keyword id="KW-0496">Mitochondrion</keyword>
<keyword id="KW-0999">Mitochondrion inner membrane</keyword>
<keyword id="KW-0679">Respiratory chain</keyword>
<keyword id="KW-0812">Transmembrane</keyword>
<keyword id="KW-1133">Transmembrane helix</keyword>
<keyword id="KW-0813">Transport</keyword>
<keyword id="KW-0830">Ubiquinone</keyword>
<sequence>MAPNIRKSHPLLKMINNSLIDLPTPSNISAWWNFGSLLAMCLATQILTGLLLAMHYTADTTLAFSSVAHTCRNVQYGWLIRNLHANGASFFFICIFLHIGRGLYYGSYLYKETWNTGVVLLLTLMATAFVGYVLPWGQMSFWGATVITNLFSAIPYIGQTLVEWAWGGFSVDNPTLTRFFALHFLLPFMIAGITITHLMFLHESGSNNPLGISSNSDKIPFHPYYSLKDILGLTLMLTPLLTLALFSPNLLGDPENFTPANPLVTPPHIKPEWYFLFAYAILRSIPNKLGGVLALAASVLILLLIPFLHKSKQRTMTFRPLSQTLFWLLVANLLVLTWVGSQPVEHPFIIIGQMASFSYFTILLILFPMTSTLENKMLNH</sequence>
<dbReference type="EMBL" id="AF534555">
    <property type="protein sequence ID" value="AAN04870.1"/>
    <property type="molecule type" value="Genomic_DNA"/>
</dbReference>
<dbReference type="SMR" id="Q8M0E7"/>
<dbReference type="GO" id="GO:0005743">
    <property type="term" value="C:mitochondrial inner membrane"/>
    <property type="evidence" value="ECO:0007669"/>
    <property type="project" value="UniProtKB-SubCell"/>
</dbReference>
<dbReference type="GO" id="GO:0045275">
    <property type="term" value="C:respiratory chain complex III"/>
    <property type="evidence" value="ECO:0007669"/>
    <property type="project" value="InterPro"/>
</dbReference>
<dbReference type="GO" id="GO:0046872">
    <property type="term" value="F:metal ion binding"/>
    <property type="evidence" value="ECO:0007669"/>
    <property type="project" value="UniProtKB-KW"/>
</dbReference>
<dbReference type="GO" id="GO:0008121">
    <property type="term" value="F:ubiquinol-cytochrome-c reductase activity"/>
    <property type="evidence" value="ECO:0007669"/>
    <property type="project" value="InterPro"/>
</dbReference>
<dbReference type="GO" id="GO:0006122">
    <property type="term" value="P:mitochondrial electron transport, ubiquinol to cytochrome c"/>
    <property type="evidence" value="ECO:0007669"/>
    <property type="project" value="TreeGrafter"/>
</dbReference>
<dbReference type="CDD" id="cd00290">
    <property type="entry name" value="cytochrome_b_C"/>
    <property type="match status" value="1"/>
</dbReference>
<dbReference type="CDD" id="cd00284">
    <property type="entry name" value="Cytochrome_b_N"/>
    <property type="match status" value="1"/>
</dbReference>
<dbReference type="FunFam" id="1.20.810.10:FF:000002">
    <property type="entry name" value="Cytochrome b"/>
    <property type="match status" value="1"/>
</dbReference>
<dbReference type="Gene3D" id="1.20.810.10">
    <property type="entry name" value="Cytochrome Bc1 Complex, Chain C"/>
    <property type="match status" value="1"/>
</dbReference>
<dbReference type="InterPro" id="IPR005798">
    <property type="entry name" value="Cyt_b/b6_C"/>
</dbReference>
<dbReference type="InterPro" id="IPR036150">
    <property type="entry name" value="Cyt_b/b6_C_sf"/>
</dbReference>
<dbReference type="InterPro" id="IPR005797">
    <property type="entry name" value="Cyt_b/b6_N"/>
</dbReference>
<dbReference type="InterPro" id="IPR027387">
    <property type="entry name" value="Cytb/b6-like_sf"/>
</dbReference>
<dbReference type="InterPro" id="IPR030689">
    <property type="entry name" value="Cytochrome_b"/>
</dbReference>
<dbReference type="InterPro" id="IPR048260">
    <property type="entry name" value="Cytochrome_b_C_euk/bac"/>
</dbReference>
<dbReference type="InterPro" id="IPR048259">
    <property type="entry name" value="Cytochrome_b_N_euk/bac"/>
</dbReference>
<dbReference type="InterPro" id="IPR016174">
    <property type="entry name" value="Di-haem_cyt_TM"/>
</dbReference>
<dbReference type="PANTHER" id="PTHR19271">
    <property type="entry name" value="CYTOCHROME B"/>
    <property type="match status" value="1"/>
</dbReference>
<dbReference type="PANTHER" id="PTHR19271:SF16">
    <property type="entry name" value="CYTOCHROME B"/>
    <property type="match status" value="1"/>
</dbReference>
<dbReference type="Pfam" id="PF00032">
    <property type="entry name" value="Cytochrom_B_C"/>
    <property type="match status" value="1"/>
</dbReference>
<dbReference type="Pfam" id="PF00033">
    <property type="entry name" value="Cytochrome_B"/>
    <property type="match status" value="1"/>
</dbReference>
<dbReference type="PIRSF" id="PIRSF038885">
    <property type="entry name" value="COB"/>
    <property type="match status" value="1"/>
</dbReference>
<dbReference type="SUPFAM" id="SSF81648">
    <property type="entry name" value="a domain/subunit of cytochrome bc1 complex (Ubiquinol-cytochrome c reductase)"/>
    <property type="match status" value="1"/>
</dbReference>
<dbReference type="SUPFAM" id="SSF81342">
    <property type="entry name" value="Transmembrane di-heme cytochromes"/>
    <property type="match status" value="1"/>
</dbReference>
<dbReference type="PROSITE" id="PS51003">
    <property type="entry name" value="CYTB_CTER"/>
    <property type="match status" value="1"/>
</dbReference>
<dbReference type="PROSITE" id="PS51002">
    <property type="entry name" value="CYTB_NTER"/>
    <property type="match status" value="1"/>
</dbReference>
<feature type="chain" id="PRO_0000061680" description="Cytochrome b">
    <location>
        <begin position="1"/>
        <end position="380"/>
    </location>
</feature>
<feature type="transmembrane region" description="Helical" evidence="2">
    <location>
        <begin position="34"/>
        <end position="54"/>
    </location>
</feature>
<feature type="transmembrane region" description="Helical" evidence="2">
    <location>
        <begin position="78"/>
        <end position="99"/>
    </location>
</feature>
<feature type="transmembrane region" description="Helical" evidence="2">
    <location>
        <begin position="114"/>
        <end position="134"/>
    </location>
</feature>
<feature type="transmembrane region" description="Helical" evidence="2">
    <location>
        <begin position="179"/>
        <end position="199"/>
    </location>
</feature>
<feature type="transmembrane region" description="Helical" evidence="2">
    <location>
        <begin position="227"/>
        <end position="247"/>
    </location>
</feature>
<feature type="transmembrane region" description="Helical" evidence="2">
    <location>
        <begin position="289"/>
        <end position="309"/>
    </location>
</feature>
<feature type="transmembrane region" description="Helical" evidence="2">
    <location>
        <begin position="321"/>
        <end position="341"/>
    </location>
</feature>
<feature type="transmembrane region" description="Helical" evidence="2">
    <location>
        <begin position="348"/>
        <end position="368"/>
    </location>
</feature>
<feature type="binding site" description="axial binding residue" evidence="2">
    <location>
        <position position="84"/>
    </location>
    <ligand>
        <name>heme b</name>
        <dbReference type="ChEBI" id="CHEBI:60344"/>
        <label>b562</label>
    </ligand>
    <ligandPart>
        <name>Fe</name>
        <dbReference type="ChEBI" id="CHEBI:18248"/>
    </ligandPart>
</feature>
<feature type="binding site" description="axial binding residue" evidence="2">
    <location>
        <position position="98"/>
    </location>
    <ligand>
        <name>heme b</name>
        <dbReference type="ChEBI" id="CHEBI:60344"/>
        <label>b566</label>
    </ligand>
    <ligandPart>
        <name>Fe</name>
        <dbReference type="ChEBI" id="CHEBI:18248"/>
    </ligandPart>
</feature>
<feature type="binding site" description="axial binding residue" evidence="2">
    <location>
        <position position="183"/>
    </location>
    <ligand>
        <name>heme b</name>
        <dbReference type="ChEBI" id="CHEBI:60344"/>
        <label>b562</label>
    </ligand>
    <ligandPart>
        <name>Fe</name>
        <dbReference type="ChEBI" id="CHEBI:18248"/>
    </ligandPart>
</feature>
<feature type="binding site" description="axial binding residue" evidence="2">
    <location>
        <position position="197"/>
    </location>
    <ligand>
        <name>heme b</name>
        <dbReference type="ChEBI" id="CHEBI:60344"/>
        <label>b566</label>
    </ligand>
    <ligandPart>
        <name>Fe</name>
        <dbReference type="ChEBI" id="CHEBI:18248"/>
    </ligandPart>
</feature>
<feature type="binding site" evidence="2">
    <location>
        <position position="202"/>
    </location>
    <ligand>
        <name>a ubiquinone</name>
        <dbReference type="ChEBI" id="CHEBI:16389"/>
    </ligand>
</feature>
<protein>
    <recommendedName>
        <fullName>Cytochrome b</fullName>
    </recommendedName>
    <alternativeName>
        <fullName>Complex III subunit 3</fullName>
    </alternativeName>
    <alternativeName>
        <fullName>Complex III subunit III</fullName>
    </alternativeName>
    <alternativeName>
        <fullName>Cytochrome b-c1 complex subunit 3</fullName>
    </alternativeName>
    <alternativeName>
        <fullName>Ubiquinol-cytochrome-c reductase complex cytochrome b subunit</fullName>
    </alternativeName>
</protein>
<comment type="function">
    <text evidence="2">Component of the ubiquinol-cytochrome c reductase complex (complex III or cytochrome b-c1 complex) that is part of the mitochondrial respiratory chain. The b-c1 complex mediates electron transfer from ubiquinol to cytochrome c. Contributes to the generation of a proton gradient across the mitochondrial membrane that is then used for ATP synthesis.</text>
</comment>
<comment type="cofactor">
    <cofactor evidence="2">
        <name>heme b</name>
        <dbReference type="ChEBI" id="CHEBI:60344"/>
    </cofactor>
    <text evidence="2">Binds 2 heme b groups non-covalently.</text>
</comment>
<comment type="subunit">
    <text evidence="2">The cytochrome bc1 complex contains 11 subunits: 3 respiratory subunits (MT-CYB, CYC1 and UQCRFS1), 2 core proteins (UQCRC1 and UQCRC2) and 6 low-molecular weight proteins (UQCRH/QCR6, UQCRB/QCR7, UQCRQ/QCR8, UQCR10/QCR9, UQCR11/QCR10 and a cleavage product of UQCRFS1). This cytochrome bc1 complex then forms a dimer.</text>
</comment>
<comment type="subcellular location">
    <subcellularLocation>
        <location evidence="2">Mitochondrion inner membrane</location>
        <topology evidence="2">Multi-pass membrane protein</topology>
    </subcellularLocation>
</comment>
<comment type="miscellaneous">
    <text evidence="1">Heme 1 (or BL or b562) is low-potential and absorbs at about 562 nm, and heme 2 (or BH or b566) is high-potential and absorbs at about 566 nm.</text>
</comment>
<comment type="similarity">
    <text evidence="3 4">Belongs to the cytochrome b family.</text>
</comment>
<comment type="caution">
    <text evidence="2">The full-length protein contains only eight transmembrane helices, not nine as predicted by bioinformatics tools.</text>
</comment>
<proteinExistence type="inferred from homology"/>
<name>CYB_TRASA</name>
<geneLocation type="mitochondrion"/>
<accession>Q8M0E7</accession>
<organism>
    <name type="scientific">Tragopan satyra</name>
    <name type="common">Satyr tragopan</name>
    <name type="synonym">Meleagris satyra</name>
    <dbReference type="NCBI Taxonomy" id="9070"/>
    <lineage>
        <taxon>Eukaryota</taxon>
        <taxon>Metazoa</taxon>
        <taxon>Chordata</taxon>
        <taxon>Craniata</taxon>
        <taxon>Vertebrata</taxon>
        <taxon>Euteleostomi</taxon>
        <taxon>Archelosauria</taxon>
        <taxon>Archosauria</taxon>
        <taxon>Dinosauria</taxon>
        <taxon>Saurischia</taxon>
        <taxon>Theropoda</taxon>
        <taxon>Coelurosauria</taxon>
        <taxon>Aves</taxon>
        <taxon>Neognathae</taxon>
        <taxon>Galloanserae</taxon>
        <taxon>Galliformes</taxon>
        <taxon>Phasianidae</taxon>
        <taxon>Phasianinae</taxon>
        <taxon>Tragopan</taxon>
    </lineage>
</organism>
<evidence type="ECO:0000250" key="1"/>
<evidence type="ECO:0000250" key="2">
    <source>
        <dbReference type="UniProtKB" id="P00157"/>
    </source>
</evidence>
<evidence type="ECO:0000255" key="3">
    <source>
        <dbReference type="PROSITE-ProRule" id="PRU00967"/>
    </source>
</evidence>
<evidence type="ECO:0000255" key="4">
    <source>
        <dbReference type="PROSITE-ProRule" id="PRU00968"/>
    </source>
</evidence>
<reference key="1">
    <citation type="journal article" date="2003" name="J. Hered.">
        <title>Phylogenetic relationships of the Phasianidae reveals possible non-pheasant taxa.</title>
        <authorList>
            <person name="Bush K.L."/>
            <person name="Strobeck C."/>
        </authorList>
    </citation>
    <scope>NUCLEOTIDE SEQUENCE [GENOMIC DNA]</scope>
    <source>
        <tissue>Blood</tissue>
    </source>
</reference>